<reference key="1">
    <citation type="journal article" date="2003" name="Nat. Biotechnol.">
        <title>The genome sequence of the entomopathogenic bacterium Photorhabdus luminescens.</title>
        <authorList>
            <person name="Duchaud E."/>
            <person name="Rusniok C."/>
            <person name="Frangeul L."/>
            <person name="Buchrieser C."/>
            <person name="Givaudan A."/>
            <person name="Taourit S."/>
            <person name="Bocs S."/>
            <person name="Boursaux-Eude C."/>
            <person name="Chandler M."/>
            <person name="Charles J.-F."/>
            <person name="Dassa E."/>
            <person name="Derose R."/>
            <person name="Derzelle S."/>
            <person name="Freyssinet G."/>
            <person name="Gaudriault S."/>
            <person name="Medigue C."/>
            <person name="Lanois A."/>
            <person name="Powell K."/>
            <person name="Siguier P."/>
            <person name="Vincent R."/>
            <person name="Wingate V."/>
            <person name="Zouine M."/>
            <person name="Glaser P."/>
            <person name="Boemare N."/>
            <person name="Danchin A."/>
            <person name="Kunst F."/>
        </authorList>
    </citation>
    <scope>NUCLEOTIDE SEQUENCE [LARGE SCALE GENOMIC DNA]</scope>
    <source>
        <strain>DSM 15139 / CIP 105565 / TT01</strain>
    </source>
</reference>
<organism>
    <name type="scientific">Photorhabdus laumondii subsp. laumondii (strain DSM 15139 / CIP 105565 / TT01)</name>
    <name type="common">Photorhabdus luminescens subsp. laumondii</name>
    <dbReference type="NCBI Taxonomy" id="243265"/>
    <lineage>
        <taxon>Bacteria</taxon>
        <taxon>Pseudomonadati</taxon>
        <taxon>Pseudomonadota</taxon>
        <taxon>Gammaproteobacteria</taxon>
        <taxon>Enterobacterales</taxon>
        <taxon>Morganellaceae</taxon>
        <taxon>Photorhabdus</taxon>
    </lineage>
</organism>
<gene>
    <name type="ordered locus">plu1293</name>
</gene>
<sequence length="87" mass="9800">MKTKLNELLEFPCSFTYKVMGLAEPELVNQVVEVVQRHAPGDYSPQVKPSSKGNYHSVSITINATHIEQVETLYEELGNLELVRVVL</sequence>
<dbReference type="EMBL" id="BX571863">
    <property type="protein sequence ID" value="CAE13587.1"/>
    <property type="molecule type" value="Genomic_DNA"/>
</dbReference>
<dbReference type="RefSeq" id="WP_011145617.1">
    <property type="nucleotide sequence ID" value="NC_005126.1"/>
</dbReference>
<dbReference type="SMR" id="Q7N765"/>
<dbReference type="STRING" id="243265.plu1293"/>
<dbReference type="GeneID" id="45656605"/>
<dbReference type="KEGG" id="plu:plu1293"/>
<dbReference type="eggNOG" id="COG2921">
    <property type="taxonomic scope" value="Bacteria"/>
</dbReference>
<dbReference type="HOGENOM" id="CLU_161438_2_1_6"/>
<dbReference type="OrthoDB" id="9793424at2"/>
<dbReference type="Proteomes" id="UP000002514">
    <property type="component" value="Chromosome"/>
</dbReference>
<dbReference type="GO" id="GO:0005829">
    <property type="term" value="C:cytosol"/>
    <property type="evidence" value="ECO:0007669"/>
    <property type="project" value="TreeGrafter"/>
</dbReference>
<dbReference type="FunFam" id="3.30.70.260:FF:000002">
    <property type="entry name" value="UPF0250 protein YbeD"/>
    <property type="match status" value="1"/>
</dbReference>
<dbReference type="Gene3D" id="3.30.70.260">
    <property type="match status" value="1"/>
</dbReference>
<dbReference type="HAMAP" id="MF_00659">
    <property type="entry name" value="UPF0250"/>
    <property type="match status" value="1"/>
</dbReference>
<dbReference type="InterPro" id="IPR007454">
    <property type="entry name" value="UPF0250_YbeD-like"/>
</dbReference>
<dbReference type="InterPro" id="IPR027471">
    <property type="entry name" value="YbeD-like_sf"/>
</dbReference>
<dbReference type="NCBIfam" id="NF003447">
    <property type="entry name" value="PRK04998.1"/>
    <property type="match status" value="1"/>
</dbReference>
<dbReference type="PANTHER" id="PTHR38036">
    <property type="entry name" value="UPF0250 PROTEIN YBED"/>
    <property type="match status" value="1"/>
</dbReference>
<dbReference type="PANTHER" id="PTHR38036:SF1">
    <property type="entry name" value="UPF0250 PROTEIN YBED"/>
    <property type="match status" value="1"/>
</dbReference>
<dbReference type="Pfam" id="PF04359">
    <property type="entry name" value="DUF493"/>
    <property type="match status" value="1"/>
</dbReference>
<dbReference type="SUPFAM" id="SSF117991">
    <property type="entry name" value="YbeD/HP0495-like"/>
    <property type="match status" value="1"/>
</dbReference>
<keyword id="KW-1185">Reference proteome</keyword>
<accession>Q7N765</accession>
<feature type="chain" id="PRO_0000209305" description="UPF0250 protein plu1293">
    <location>
        <begin position="1"/>
        <end position="87"/>
    </location>
</feature>
<proteinExistence type="inferred from homology"/>
<comment type="similarity">
    <text evidence="1">Belongs to the UPF0250 family.</text>
</comment>
<evidence type="ECO:0000255" key="1">
    <source>
        <dbReference type="HAMAP-Rule" id="MF_00659"/>
    </source>
</evidence>
<protein>
    <recommendedName>
        <fullName evidence="1">UPF0250 protein plu1293</fullName>
    </recommendedName>
</protein>
<name>Y1293_PHOLL</name>